<organism>
    <name type="scientific">Sus scrofa</name>
    <name type="common">Pig</name>
    <dbReference type="NCBI Taxonomy" id="9823"/>
    <lineage>
        <taxon>Eukaryota</taxon>
        <taxon>Metazoa</taxon>
        <taxon>Chordata</taxon>
        <taxon>Craniata</taxon>
        <taxon>Vertebrata</taxon>
        <taxon>Euteleostomi</taxon>
        <taxon>Mammalia</taxon>
        <taxon>Eutheria</taxon>
        <taxon>Laurasiatheria</taxon>
        <taxon>Artiodactyla</taxon>
        <taxon>Suina</taxon>
        <taxon>Suidae</taxon>
        <taxon>Sus</taxon>
    </lineage>
</organism>
<gene>
    <name evidence="2" type="primary">SELENOS</name>
    <name evidence="6" type="synonym">SELS</name>
</gene>
<reference evidence="7 8" key="1">
    <citation type="journal article" date="2011" name="Mol. Biol. Rep.">
        <title>Molecular characterization and NF-kappaB-regulated transcription of selenoprotein S from the Bama mini-pig.</title>
        <authorList>
            <person name="Zhang N."/>
            <person name="Jing W."/>
            <person name="Cheng J."/>
            <person name="Cui W."/>
            <person name="Mu Y."/>
            <person name="Li K."/>
            <person name="Lei X."/>
        </authorList>
    </citation>
    <scope>NUCLEOTIDE SEQUENCE [MRNA]</scope>
    <scope>SUBCELLULAR LOCATION</scope>
    <scope>TISSUE SPECIFICITY</scope>
    <source>
        <strain evidence="5">Guanxi bama miniature pig</strain>
        <tissue evidence="8">Liver</tissue>
    </source>
</reference>
<reference key="2">
    <citation type="submission" date="2009-11" db="EMBL/GenBank/DDBJ databases">
        <authorList>
            <consortium name="Swine Genome Sequencing Consortium."/>
        </authorList>
    </citation>
    <scope>NUCLEOTIDE SEQUENCE [LARGE SCALE GENOMIC DNA]</scope>
    <source>
        <strain>Landrace</strain>
    </source>
</reference>
<dbReference type="EMBL" id="GU983865">
    <property type="protein sequence ID" value="ADJ67513.1"/>
    <property type="molecule type" value="mRNA"/>
</dbReference>
<dbReference type="EMBL" id="CU467921">
    <property type="status" value="NOT_ANNOTATED_CDS"/>
    <property type="molecule type" value="Genomic_DNA"/>
</dbReference>
<dbReference type="RefSeq" id="NP_001157585.1">
    <property type="nucleotide sequence ID" value="NM_001164113.1"/>
</dbReference>
<dbReference type="FunCoup" id="F1SR90">
    <property type="interactions" value="325"/>
</dbReference>
<dbReference type="STRING" id="9823.ENSSSCP00000005198"/>
<dbReference type="PaxDb" id="9823-ENSSSCP00000005198"/>
<dbReference type="PeptideAtlas" id="F1SR90"/>
<dbReference type="Ensembl" id="ENSSSCT00000005328.4">
    <property type="protein sequence ID" value="ENSSSCP00000005198.3"/>
    <property type="gene ID" value="ENSSSCG00000004826.4"/>
</dbReference>
<dbReference type="Ensembl" id="ENSSSCT00015009328.1">
    <property type="protein sequence ID" value="ENSSSCP00015003719.1"/>
    <property type="gene ID" value="ENSSSCG00015007042.1"/>
</dbReference>
<dbReference type="Ensembl" id="ENSSSCT00025047518.1">
    <property type="protein sequence ID" value="ENSSSCP00025020357.1"/>
    <property type="gene ID" value="ENSSSCG00025034862.1"/>
</dbReference>
<dbReference type="Ensembl" id="ENSSSCT00030083765.1">
    <property type="protein sequence ID" value="ENSSSCP00030038485.1"/>
    <property type="gene ID" value="ENSSSCG00030060018.1"/>
</dbReference>
<dbReference type="Ensembl" id="ENSSSCT00035076131.1">
    <property type="protein sequence ID" value="ENSSSCP00035031074.1"/>
    <property type="gene ID" value="ENSSSCG00035056945.1"/>
</dbReference>
<dbReference type="Ensembl" id="ENSSSCT00040099309.1">
    <property type="protein sequence ID" value="ENSSSCP00040044466.1"/>
    <property type="gene ID" value="ENSSSCG00040072172.1"/>
</dbReference>
<dbReference type="Ensembl" id="ENSSSCT00050043302.1">
    <property type="protein sequence ID" value="ENSSSCP00050017883.1"/>
    <property type="gene ID" value="ENSSSCG00050032250.1"/>
</dbReference>
<dbReference type="Ensembl" id="ENSSSCT00055011141.1">
    <property type="protein sequence ID" value="ENSSSCP00055008794.1"/>
    <property type="gene ID" value="ENSSSCG00055005728.1"/>
</dbReference>
<dbReference type="Ensembl" id="ENSSSCT00060067522.1">
    <property type="protein sequence ID" value="ENSSSCP00060028949.1"/>
    <property type="gene ID" value="ENSSSCG00060049719.1"/>
</dbReference>
<dbReference type="Ensembl" id="ENSSSCT00065016715.1">
    <property type="protein sequence ID" value="ENSSSCP00065006839.1"/>
    <property type="gene ID" value="ENSSSCG00065012554.1"/>
</dbReference>
<dbReference type="Ensembl" id="ENSSSCT00070032817.1">
    <property type="protein sequence ID" value="ENSSSCP00070027391.1"/>
    <property type="gene ID" value="ENSSSCG00070016664.1"/>
</dbReference>
<dbReference type="Ensembl" id="ENSSSCT00090042475">
    <property type="protein sequence ID" value="ENSSSCP00090026435"/>
    <property type="gene ID" value="ENSSSCG00090024012"/>
</dbReference>
<dbReference type="Ensembl" id="ENSSSCT00105008433">
    <property type="protein sequence ID" value="ENSSSCP00105006159"/>
    <property type="gene ID" value="ENSSSCG00105004206"/>
</dbReference>
<dbReference type="Ensembl" id="ENSSSCT00110039007">
    <property type="protein sequence ID" value="ENSSSCP00110026949"/>
    <property type="gene ID" value="ENSSSCG00110020308"/>
</dbReference>
<dbReference type="Ensembl" id="ENSSSCT00130060718">
    <property type="protein sequence ID" value="ENSSSCP00130043590"/>
    <property type="gene ID" value="ENSSSCG00130031053"/>
</dbReference>
<dbReference type="GeneID" id="100151836"/>
<dbReference type="KEGG" id="ssc:100151836"/>
<dbReference type="CTD" id="55829"/>
<dbReference type="VGNC" id="VGNC:98308">
    <property type="gene designation" value="SELENOS"/>
</dbReference>
<dbReference type="eggNOG" id="ENOG502RXYU">
    <property type="taxonomic scope" value="Eukaryota"/>
</dbReference>
<dbReference type="GeneTree" id="ENSGT00390000015688"/>
<dbReference type="HOGENOM" id="CLU_117238_0_0_1"/>
<dbReference type="InParanoid" id="F1SR90"/>
<dbReference type="OMA" id="KIAMWEN"/>
<dbReference type="OrthoDB" id="75792at2759"/>
<dbReference type="Proteomes" id="UP000008227">
    <property type="component" value="Chromosome 1"/>
</dbReference>
<dbReference type="Proteomes" id="UP000314985">
    <property type="component" value="Chromosome 1"/>
</dbReference>
<dbReference type="Proteomes" id="UP000694570">
    <property type="component" value="Unplaced"/>
</dbReference>
<dbReference type="Proteomes" id="UP000694571">
    <property type="component" value="Unplaced"/>
</dbReference>
<dbReference type="Proteomes" id="UP000694720">
    <property type="component" value="Unplaced"/>
</dbReference>
<dbReference type="Proteomes" id="UP000694722">
    <property type="component" value="Unplaced"/>
</dbReference>
<dbReference type="Proteomes" id="UP000694723">
    <property type="component" value="Unplaced"/>
</dbReference>
<dbReference type="Proteomes" id="UP000694724">
    <property type="component" value="Unplaced"/>
</dbReference>
<dbReference type="Proteomes" id="UP000694725">
    <property type="component" value="Unplaced"/>
</dbReference>
<dbReference type="Proteomes" id="UP000694726">
    <property type="component" value="Unplaced"/>
</dbReference>
<dbReference type="Proteomes" id="UP000694727">
    <property type="component" value="Unplaced"/>
</dbReference>
<dbReference type="Proteomes" id="UP000694728">
    <property type="component" value="Unplaced"/>
</dbReference>
<dbReference type="Bgee" id="ENSSSCG00000004826">
    <property type="expression patterns" value="Expressed in duodenum and 45 other cell types or tissues"/>
</dbReference>
<dbReference type="GO" id="GO:0005881">
    <property type="term" value="C:cytoplasmic microtubule"/>
    <property type="evidence" value="ECO:0000250"/>
    <property type="project" value="UniProtKB"/>
</dbReference>
<dbReference type="GO" id="GO:0036513">
    <property type="term" value="C:Derlin-1 retrotranslocation complex"/>
    <property type="evidence" value="ECO:0000318"/>
    <property type="project" value="GO_Central"/>
</dbReference>
<dbReference type="GO" id="GO:0036502">
    <property type="term" value="C:Derlin-1-VIMP complex"/>
    <property type="evidence" value="ECO:0000318"/>
    <property type="project" value="GO_Central"/>
</dbReference>
<dbReference type="GO" id="GO:0034362">
    <property type="term" value="C:low-density lipoprotein particle"/>
    <property type="evidence" value="ECO:0007669"/>
    <property type="project" value="Ensembl"/>
</dbReference>
<dbReference type="GO" id="GO:0034361">
    <property type="term" value="C:very-low-density lipoprotein particle"/>
    <property type="evidence" value="ECO:0007669"/>
    <property type="project" value="Ensembl"/>
</dbReference>
<dbReference type="GO" id="GO:0016209">
    <property type="term" value="F:antioxidant activity"/>
    <property type="evidence" value="ECO:0007669"/>
    <property type="project" value="Ensembl"/>
</dbReference>
<dbReference type="GO" id="GO:0051117">
    <property type="term" value="F:ATPase binding"/>
    <property type="evidence" value="ECO:0007669"/>
    <property type="project" value="Ensembl"/>
</dbReference>
<dbReference type="GO" id="GO:1990381">
    <property type="term" value="F:ubiquitin-specific protease binding"/>
    <property type="evidence" value="ECO:0007669"/>
    <property type="project" value="Ensembl"/>
</dbReference>
<dbReference type="GO" id="GO:0045454">
    <property type="term" value="P:cell redox homeostasis"/>
    <property type="evidence" value="ECO:0007669"/>
    <property type="project" value="Ensembl"/>
</dbReference>
<dbReference type="GO" id="GO:0071222">
    <property type="term" value="P:cellular response to lipopolysaccharide"/>
    <property type="evidence" value="ECO:0007669"/>
    <property type="project" value="Ensembl"/>
</dbReference>
<dbReference type="GO" id="GO:0034599">
    <property type="term" value="P:cellular response to oxidative stress"/>
    <property type="evidence" value="ECO:0007669"/>
    <property type="project" value="Ensembl"/>
</dbReference>
<dbReference type="GO" id="GO:0030968">
    <property type="term" value="P:endoplasmic reticulum unfolded protein response"/>
    <property type="evidence" value="ECO:0000318"/>
    <property type="project" value="GO_Central"/>
</dbReference>
<dbReference type="GO" id="GO:0006983">
    <property type="term" value="P:ER overload response"/>
    <property type="evidence" value="ECO:0007669"/>
    <property type="project" value="Ensembl"/>
</dbReference>
<dbReference type="GO" id="GO:0002865">
    <property type="term" value="P:negative regulation of acute inflammatory response to antigenic stimulus"/>
    <property type="evidence" value="ECO:0007669"/>
    <property type="project" value="Ensembl"/>
</dbReference>
<dbReference type="GO" id="GO:1902236">
    <property type="term" value="P:negative regulation of endoplasmic reticulum stress-induced intrinsic apoptotic signaling pathway"/>
    <property type="evidence" value="ECO:0007669"/>
    <property type="project" value="Ensembl"/>
</dbReference>
<dbReference type="GO" id="GO:2000110">
    <property type="term" value="P:negative regulation of macrophage apoptotic process"/>
    <property type="evidence" value="ECO:0007669"/>
    <property type="project" value="Ensembl"/>
</dbReference>
<dbReference type="GO" id="GO:0080164">
    <property type="term" value="P:regulation of nitric oxide metabolic process"/>
    <property type="evidence" value="ECO:0007669"/>
    <property type="project" value="Ensembl"/>
</dbReference>
<dbReference type="GO" id="GO:0009749">
    <property type="term" value="P:response to glucose"/>
    <property type="evidence" value="ECO:0007669"/>
    <property type="project" value="Ensembl"/>
</dbReference>
<dbReference type="GO" id="GO:0051775">
    <property type="term" value="P:response to redox state"/>
    <property type="evidence" value="ECO:0007669"/>
    <property type="project" value="Ensembl"/>
</dbReference>
<dbReference type="GO" id="GO:0030970">
    <property type="term" value="P:retrograde protein transport, ER to cytosol"/>
    <property type="evidence" value="ECO:0000318"/>
    <property type="project" value="GO_Central"/>
</dbReference>
<dbReference type="Gene3D" id="6.10.250.2950">
    <property type="match status" value="1"/>
</dbReference>
<dbReference type="InterPro" id="IPR009703">
    <property type="entry name" value="Selenoprotein_S"/>
</dbReference>
<dbReference type="PANTHER" id="PTHR28621">
    <property type="entry name" value="SELENOPROTEIN S"/>
    <property type="match status" value="1"/>
</dbReference>
<dbReference type="PANTHER" id="PTHR28621:SF1">
    <property type="entry name" value="SELENOPROTEIN S"/>
    <property type="match status" value="1"/>
</dbReference>
<dbReference type="Pfam" id="PF06936">
    <property type="entry name" value="Selenoprotein_S"/>
    <property type="match status" value="1"/>
</dbReference>
<comment type="function">
    <text evidence="2">Involved in the degradation process of misfolded endoplasmic reticulum (ER) luminal proteins. Participates in the transfer of misfolded proteins from the ER to the cytosol, where they are destroyed by the proteasome in a ubiquitin-dependent manner. Probably acts by serving as a linker between DERL1, which mediates the retrotranslocation of misfolded proteins into the cytosol, and the ATPase complex VCP, which mediates the translocation and ubiquitination (By similarity).</text>
</comment>
<comment type="subunit">
    <text evidence="1 2">Interacts with DERL1 and (via VIM motif) with VCP, suggesting that it forms a membrane complex with DERL1 that serves as a receptor for VCP. Also interacts with DERL2, DERL3 and SELENOK. The SELENOK-SELENOS complex interacts with VCP (By similarity).</text>
</comment>
<comment type="subcellular location">
    <subcellularLocation>
        <location evidence="5">Cytoplasm</location>
    </subcellularLocation>
    <subcellularLocation>
        <location evidence="2">Endoplasmic reticulum membrane</location>
        <topology evidence="2">Single-pass membrane protein</topology>
    </subcellularLocation>
</comment>
<comment type="tissue specificity">
    <text evidence="5">Ubiquitously expressed. Highest expression in liver and lung, with lower levels detected in spleen, kidney, brain, lymph nodes, small intestine, stomach and heart. Very low expression detected in longissimus dorsi.</text>
</comment>
<comment type="PTM">
    <text evidence="2">Truncated SELENOS proteins produced by failed UGA/Sec decoding are ubiquitinated by the CRL2(KLHDC2) and CRL2(KLHDC3) complexes, which recognizes the glycine (Gly) at the C-terminus of truncated SELENOS proteins. Truncated SELENOS proteins produced by failed UGA/Sec decoding are also ubiquitinated by the CRL5(KLHDC1) complex.</text>
</comment>
<comment type="similarity">
    <text evidence="3">Belongs to the selenoprotein S family.</text>
</comment>
<comment type="sequence caution" evidence="7">
    <conflict type="erroneous termination">
        <sequence resource="EMBL" id="CU467921"/>
    </conflict>
    <text>Truncated C-terminus.</text>
</comment>
<keyword id="KW-0963">Cytoplasm</keyword>
<keyword id="KW-0256">Endoplasmic reticulum</keyword>
<keyword id="KW-0472">Membrane</keyword>
<keyword id="KW-0597">Phosphoprotein</keyword>
<keyword id="KW-1185">Reference proteome</keyword>
<keyword id="KW-0712">Selenocysteine</keyword>
<keyword id="KW-0812">Transmembrane</keyword>
<keyword id="KW-1133">Transmembrane helix</keyword>
<keyword id="KW-0832">Ubl conjugation</keyword>
<sequence length="190" mass="21279">MEQDGDQLSARPALETEGLRFLHVTVGSLLATYGWYIVFCCILLYVVFQKLSTRLRALRQRHLDGAAAALEPDVVVKRQEALAAARLKMQEELNAQVEKHKEKLRQLEEEKRRQKIERWDSVQEGRSYRGDARKRQEEDSPGPSTSSVIPKRKSDKKPLRGGGYNPLSGEGGGACSWRPGRRGPSSGGUG</sequence>
<proteinExistence type="evidence at transcript level"/>
<protein>
    <recommendedName>
        <fullName evidence="6">Selenoprotein S</fullName>
        <shortName evidence="6">SelS</shortName>
    </recommendedName>
</protein>
<evidence type="ECO:0000250" key="1"/>
<evidence type="ECO:0000250" key="2">
    <source>
        <dbReference type="UniProtKB" id="Q9BQE4"/>
    </source>
</evidence>
<evidence type="ECO:0000255" key="3"/>
<evidence type="ECO:0000256" key="4">
    <source>
        <dbReference type="SAM" id="MobiDB-lite"/>
    </source>
</evidence>
<evidence type="ECO:0000269" key="5">
    <source>
    </source>
</evidence>
<evidence type="ECO:0000303" key="6">
    <source>
    </source>
</evidence>
<evidence type="ECO:0000305" key="7"/>
<evidence type="ECO:0000312" key="8">
    <source>
        <dbReference type="EMBL" id="ADJ67513.1"/>
    </source>
</evidence>
<feature type="chain" id="PRO_0000411969" description="Selenoprotein S">
    <location>
        <begin position="1"/>
        <end position="190"/>
    </location>
</feature>
<feature type="transmembrane region" description="Helical" evidence="3">
    <location>
        <begin position="28"/>
        <end position="48"/>
    </location>
</feature>
<feature type="region of interest" description="VCP/p97-interacting motif (VIM)" evidence="2">
    <location>
        <begin position="78"/>
        <end position="90"/>
    </location>
</feature>
<feature type="region of interest" description="Disordered" evidence="4">
    <location>
        <begin position="115"/>
        <end position="190"/>
    </location>
</feature>
<feature type="compositionally biased region" description="Basic and acidic residues" evidence="4">
    <location>
        <begin position="115"/>
        <end position="138"/>
    </location>
</feature>
<feature type="compositionally biased region" description="Gly residues" evidence="4">
    <location>
        <begin position="160"/>
        <end position="174"/>
    </location>
</feature>
<feature type="non-standard amino acid" description="Selenocysteine" evidence="2">
    <location>
        <position position="189"/>
    </location>
</feature>
<feature type="modified residue" description="Phosphoserine" evidence="2">
    <location>
        <position position="140"/>
    </location>
</feature>
<name>SELS_PIG</name>
<accession>F1SR90</accession>
<accession>D9DBG2</accession>